<organism>
    <name type="scientific">Ruegeria sp. (strain TM1040)</name>
    <name type="common">Silicibacter sp.</name>
    <dbReference type="NCBI Taxonomy" id="292414"/>
    <lineage>
        <taxon>Bacteria</taxon>
        <taxon>Pseudomonadati</taxon>
        <taxon>Pseudomonadota</taxon>
        <taxon>Alphaproteobacteria</taxon>
        <taxon>Rhodobacterales</taxon>
        <taxon>Roseobacteraceae</taxon>
        <taxon>Ruegeria</taxon>
    </lineage>
</organism>
<feature type="chain" id="PRO_1000006184" description="Elongation factor Ts">
    <location>
        <begin position="1"/>
        <end position="291"/>
    </location>
</feature>
<feature type="region of interest" description="Involved in Mg(2+) ion dislocation from EF-Tu" evidence="1">
    <location>
        <begin position="79"/>
        <end position="82"/>
    </location>
</feature>
<keyword id="KW-0963">Cytoplasm</keyword>
<keyword id="KW-0251">Elongation factor</keyword>
<keyword id="KW-0648">Protein biosynthesis</keyword>
<keyword id="KW-1185">Reference proteome</keyword>
<name>EFTS_RUEST</name>
<gene>
    <name evidence="1" type="primary">tsf</name>
    <name type="ordered locus">TM1040_1211</name>
</gene>
<sequence length="291" mass="30328">MAITAAMVKELRESTGAGMMDAKKALVENDGDMEAAVDWLRTKGLAKAAKKSGRTAAEGLVAVVVDGGKGVAVEVNSETDFVAKNGEFQTMVAGIAKAALSVNTVEELAEADLGGKTVATTLTDKIATIGENMTLRRMAKLEGETVVSYVHNAATDGMGKIGVLVALSGGDEAIGKQVAMHIAAVNPAALSEADLDPAIVEKERQVQIDIARESGKPEQVIEKMIEGRMKKFVAESTLLNQQFVVNPDLTVEAAAKEAGATVTGFIRVEVGEGIEVEKEDFAAEVAKAAQG</sequence>
<accession>Q1GHC2</accession>
<protein>
    <recommendedName>
        <fullName evidence="1">Elongation factor Ts</fullName>
        <shortName evidence="1">EF-Ts</shortName>
    </recommendedName>
</protein>
<evidence type="ECO:0000255" key="1">
    <source>
        <dbReference type="HAMAP-Rule" id="MF_00050"/>
    </source>
</evidence>
<reference key="1">
    <citation type="submission" date="2006-05" db="EMBL/GenBank/DDBJ databases">
        <title>Complete sequence of chromosome of Silicibacter sp. TM1040.</title>
        <authorList>
            <consortium name="US DOE Joint Genome Institute"/>
            <person name="Copeland A."/>
            <person name="Lucas S."/>
            <person name="Lapidus A."/>
            <person name="Barry K."/>
            <person name="Detter J.C."/>
            <person name="Glavina del Rio T."/>
            <person name="Hammon N."/>
            <person name="Israni S."/>
            <person name="Dalin E."/>
            <person name="Tice H."/>
            <person name="Pitluck S."/>
            <person name="Brettin T."/>
            <person name="Bruce D."/>
            <person name="Han C."/>
            <person name="Tapia R."/>
            <person name="Goodwin L."/>
            <person name="Thompson L.S."/>
            <person name="Gilna P."/>
            <person name="Schmutz J."/>
            <person name="Larimer F."/>
            <person name="Land M."/>
            <person name="Hauser L."/>
            <person name="Kyrpides N."/>
            <person name="Kim E."/>
            <person name="Belas R."/>
            <person name="Moran M.A."/>
            <person name="Buchan A."/>
            <person name="Gonzalez J.M."/>
            <person name="Schell M.A."/>
            <person name="Sun F."/>
            <person name="Richardson P."/>
        </authorList>
    </citation>
    <scope>NUCLEOTIDE SEQUENCE [LARGE SCALE GENOMIC DNA]</scope>
    <source>
        <strain>TM1040</strain>
    </source>
</reference>
<proteinExistence type="inferred from homology"/>
<dbReference type="EMBL" id="CP000377">
    <property type="protein sequence ID" value="ABF63944.1"/>
    <property type="molecule type" value="Genomic_DNA"/>
</dbReference>
<dbReference type="RefSeq" id="WP_011538550.1">
    <property type="nucleotide sequence ID" value="NC_008044.1"/>
</dbReference>
<dbReference type="SMR" id="Q1GHC2"/>
<dbReference type="STRING" id="292414.TM1040_1211"/>
<dbReference type="KEGG" id="sit:TM1040_1211"/>
<dbReference type="eggNOG" id="COG0264">
    <property type="taxonomic scope" value="Bacteria"/>
</dbReference>
<dbReference type="HOGENOM" id="CLU_047155_2_0_5"/>
<dbReference type="OrthoDB" id="9808348at2"/>
<dbReference type="Proteomes" id="UP000000636">
    <property type="component" value="Chromosome"/>
</dbReference>
<dbReference type="GO" id="GO:0005737">
    <property type="term" value="C:cytoplasm"/>
    <property type="evidence" value="ECO:0007669"/>
    <property type="project" value="UniProtKB-SubCell"/>
</dbReference>
<dbReference type="GO" id="GO:0003746">
    <property type="term" value="F:translation elongation factor activity"/>
    <property type="evidence" value="ECO:0007669"/>
    <property type="project" value="UniProtKB-UniRule"/>
</dbReference>
<dbReference type="CDD" id="cd14275">
    <property type="entry name" value="UBA_EF-Ts"/>
    <property type="match status" value="1"/>
</dbReference>
<dbReference type="FunFam" id="1.10.286.20:FF:000001">
    <property type="entry name" value="Elongation factor Ts"/>
    <property type="match status" value="1"/>
</dbReference>
<dbReference type="FunFam" id="1.10.8.10:FF:000001">
    <property type="entry name" value="Elongation factor Ts"/>
    <property type="match status" value="1"/>
</dbReference>
<dbReference type="Gene3D" id="1.10.286.20">
    <property type="match status" value="1"/>
</dbReference>
<dbReference type="Gene3D" id="1.10.8.10">
    <property type="entry name" value="DNA helicase RuvA subunit, C-terminal domain"/>
    <property type="match status" value="1"/>
</dbReference>
<dbReference type="Gene3D" id="3.30.479.20">
    <property type="entry name" value="Elongation factor Ts, dimerisation domain"/>
    <property type="match status" value="2"/>
</dbReference>
<dbReference type="HAMAP" id="MF_00050">
    <property type="entry name" value="EF_Ts"/>
    <property type="match status" value="1"/>
</dbReference>
<dbReference type="InterPro" id="IPR036402">
    <property type="entry name" value="EF-Ts_dimer_sf"/>
</dbReference>
<dbReference type="InterPro" id="IPR001816">
    <property type="entry name" value="Transl_elong_EFTs/EF1B"/>
</dbReference>
<dbReference type="InterPro" id="IPR014039">
    <property type="entry name" value="Transl_elong_EFTs/EF1B_dimer"/>
</dbReference>
<dbReference type="InterPro" id="IPR018101">
    <property type="entry name" value="Transl_elong_Ts_CS"/>
</dbReference>
<dbReference type="InterPro" id="IPR009060">
    <property type="entry name" value="UBA-like_sf"/>
</dbReference>
<dbReference type="NCBIfam" id="TIGR00116">
    <property type="entry name" value="tsf"/>
    <property type="match status" value="1"/>
</dbReference>
<dbReference type="PANTHER" id="PTHR11741">
    <property type="entry name" value="ELONGATION FACTOR TS"/>
    <property type="match status" value="1"/>
</dbReference>
<dbReference type="PANTHER" id="PTHR11741:SF0">
    <property type="entry name" value="ELONGATION FACTOR TS, MITOCHONDRIAL"/>
    <property type="match status" value="1"/>
</dbReference>
<dbReference type="Pfam" id="PF00889">
    <property type="entry name" value="EF_TS"/>
    <property type="match status" value="1"/>
</dbReference>
<dbReference type="SUPFAM" id="SSF54713">
    <property type="entry name" value="Elongation factor Ts (EF-Ts), dimerisation domain"/>
    <property type="match status" value="2"/>
</dbReference>
<dbReference type="SUPFAM" id="SSF46934">
    <property type="entry name" value="UBA-like"/>
    <property type="match status" value="1"/>
</dbReference>
<dbReference type="PROSITE" id="PS01126">
    <property type="entry name" value="EF_TS_1"/>
    <property type="match status" value="1"/>
</dbReference>
<dbReference type="PROSITE" id="PS01127">
    <property type="entry name" value="EF_TS_2"/>
    <property type="match status" value="1"/>
</dbReference>
<comment type="function">
    <text evidence="1">Associates with the EF-Tu.GDP complex and induces the exchange of GDP to GTP. It remains bound to the aminoacyl-tRNA.EF-Tu.GTP complex up to the GTP hydrolysis stage on the ribosome.</text>
</comment>
<comment type="subcellular location">
    <subcellularLocation>
        <location evidence="1">Cytoplasm</location>
    </subcellularLocation>
</comment>
<comment type="similarity">
    <text evidence="1">Belongs to the EF-Ts family.</text>
</comment>